<organism>
    <name type="scientific">Psychrobacter arcticus (strain DSM 17307 / VKM B-2377 / 273-4)</name>
    <dbReference type="NCBI Taxonomy" id="259536"/>
    <lineage>
        <taxon>Bacteria</taxon>
        <taxon>Pseudomonadati</taxon>
        <taxon>Pseudomonadota</taxon>
        <taxon>Gammaproteobacteria</taxon>
        <taxon>Moraxellales</taxon>
        <taxon>Moraxellaceae</taxon>
        <taxon>Psychrobacter</taxon>
    </lineage>
</organism>
<evidence type="ECO:0000255" key="1">
    <source>
        <dbReference type="HAMAP-Rule" id="MF_00361"/>
    </source>
</evidence>
<evidence type="ECO:0000305" key="2"/>
<accession>Q4FRP5</accession>
<keyword id="KW-0067">ATP-binding</keyword>
<keyword id="KW-0963">Cytoplasm</keyword>
<keyword id="KW-0418">Kinase</keyword>
<keyword id="KW-0520">NAD</keyword>
<keyword id="KW-0521">NADP</keyword>
<keyword id="KW-0547">Nucleotide-binding</keyword>
<keyword id="KW-1185">Reference proteome</keyword>
<keyword id="KW-0808">Transferase</keyword>
<feature type="chain" id="PRO_0000229682" description="NAD kinase">
    <location>
        <begin position="1"/>
        <end position="325"/>
    </location>
</feature>
<feature type="active site" description="Proton acceptor" evidence="1">
    <location>
        <position position="91"/>
    </location>
</feature>
<feature type="binding site" evidence="1">
    <location>
        <begin position="91"/>
        <end position="92"/>
    </location>
    <ligand>
        <name>NAD(+)</name>
        <dbReference type="ChEBI" id="CHEBI:57540"/>
    </ligand>
</feature>
<feature type="binding site" evidence="1">
    <location>
        <position position="96"/>
    </location>
    <ligand>
        <name>NAD(+)</name>
        <dbReference type="ChEBI" id="CHEBI:57540"/>
    </ligand>
</feature>
<feature type="binding site" evidence="1">
    <location>
        <begin position="165"/>
        <end position="166"/>
    </location>
    <ligand>
        <name>NAD(+)</name>
        <dbReference type="ChEBI" id="CHEBI:57540"/>
    </ligand>
</feature>
<feature type="binding site" evidence="1">
    <location>
        <position position="176"/>
    </location>
    <ligand>
        <name>NAD(+)</name>
        <dbReference type="ChEBI" id="CHEBI:57540"/>
    </ligand>
</feature>
<feature type="binding site" evidence="1">
    <location>
        <position position="193"/>
    </location>
    <ligand>
        <name>NAD(+)</name>
        <dbReference type="ChEBI" id="CHEBI:57540"/>
    </ligand>
</feature>
<feature type="binding site" evidence="1">
    <location>
        <position position="195"/>
    </location>
    <ligand>
        <name>NAD(+)</name>
        <dbReference type="ChEBI" id="CHEBI:57540"/>
    </ligand>
</feature>
<feature type="binding site" evidence="1">
    <location>
        <begin position="206"/>
        <end position="211"/>
    </location>
    <ligand>
        <name>NAD(+)</name>
        <dbReference type="ChEBI" id="CHEBI:57540"/>
    </ligand>
</feature>
<reference key="1">
    <citation type="journal article" date="2010" name="Appl. Environ. Microbiol.">
        <title>The genome sequence of Psychrobacter arcticus 273-4, a psychroactive Siberian permafrost bacterium, reveals mechanisms for adaptation to low-temperature growth.</title>
        <authorList>
            <person name="Ayala-del-Rio H.L."/>
            <person name="Chain P.S."/>
            <person name="Grzymski J.J."/>
            <person name="Ponder M.A."/>
            <person name="Ivanova N."/>
            <person name="Bergholz P.W."/>
            <person name="Di Bartolo G."/>
            <person name="Hauser L."/>
            <person name="Land M."/>
            <person name="Bakermans C."/>
            <person name="Rodrigues D."/>
            <person name="Klappenbach J."/>
            <person name="Zarka D."/>
            <person name="Larimer F."/>
            <person name="Richardson P."/>
            <person name="Murray A."/>
            <person name="Thomashow M."/>
            <person name="Tiedje J.M."/>
        </authorList>
    </citation>
    <scope>NUCLEOTIDE SEQUENCE [LARGE SCALE GENOMIC DNA]</scope>
    <source>
        <strain>DSM 17307 / VKM B-2377 / 273-4</strain>
    </source>
</reference>
<proteinExistence type="inferred from homology"/>
<dbReference type="EC" id="2.7.1.23" evidence="1"/>
<dbReference type="EMBL" id="CP000082">
    <property type="protein sequence ID" value="AAZ19313.1"/>
    <property type="status" value="ALT_INIT"/>
    <property type="molecule type" value="Genomic_DNA"/>
</dbReference>
<dbReference type="SMR" id="Q4FRP5"/>
<dbReference type="STRING" id="259536.Psyc_1465"/>
<dbReference type="KEGG" id="par:Psyc_1465"/>
<dbReference type="eggNOG" id="COG0061">
    <property type="taxonomic scope" value="Bacteria"/>
</dbReference>
<dbReference type="HOGENOM" id="CLU_008831_0_1_6"/>
<dbReference type="Proteomes" id="UP000000546">
    <property type="component" value="Chromosome"/>
</dbReference>
<dbReference type="GO" id="GO:0005737">
    <property type="term" value="C:cytoplasm"/>
    <property type="evidence" value="ECO:0007669"/>
    <property type="project" value="UniProtKB-SubCell"/>
</dbReference>
<dbReference type="GO" id="GO:0005524">
    <property type="term" value="F:ATP binding"/>
    <property type="evidence" value="ECO:0007669"/>
    <property type="project" value="UniProtKB-KW"/>
</dbReference>
<dbReference type="GO" id="GO:0046872">
    <property type="term" value="F:metal ion binding"/>
    <property type="evidence" value="ECO:0007669"/>
    <property type="project" value="UniProtKB-UniRule"/>
</dbReference>
<dbReference type="GO" id="GO:0051287">
    <property type="term" value="F:NAD binding"/>
    <property type="evidence" value="ECO:0007669"/>
    <property type="project" value="UniProtKB-ARBA"/>
</dbReference>
<dbReference type="GO" id="GO:0003951">
    <property type="term" value="F:NAD+ kinase activity"/>
    <property type="evidence" value="ECO:0007669"/>
    <property type="project" value="UniProtKB-UniRule"/>
</dbReference>
<dbReference type="GO" id="GO:0019674">
    <property type="term" value="P:NAD metabolic process"/>
    <property type="evidence" value="ECO:0007669"/>
    <property type="project" value="InterPro"/>
</dbReference>
<dbReference type="GO" id="GO:0006741">
    <property type="term" value="P:NADP biosynthetic process"/>
    <property type="evidence" value="ECO:0007669"/>
    <property type="project" value="UniProtKB-UniRule"/>
</dbReference>
<dbReference type="Gene3D" id="3.40.50.10330">
    <property type="entry name" value="Probable inorganic polyphosphate/atp-NAD kinase, domain 1"/>
    <property type="match status" value="1"/>
</dbReference>
<dbReference type="Gene3D" id="2.60.200.30">
    <property type="entry name" value="Probable inorganic polyphosphate/atp-NAD kinase, domain 2"/>
    <property type="match status" value="1"/>
</dbReference>
<dbReference type="HAMAP" id="MF_00361">
    <property type="entry name" value="NAD_kinase"/>
    <property type="match status" value="1"/>
</dbReference>
<dbReference type="InterPro" id="IPR017438">
    <property type="entry name" value="ATP-NAD_kinase_N"/>
</dbReference>
<dbReference type="InterPro" id="IPR017437">
    <property type="entry name" value="ATP-NAD_kinase_PpnK-typ_C"/>
</dbReference>
<dbReference type="InterPro" id="IPR016064">
    <property type="entry name" value="NAD/diacylglycerol_kinase_sf"/>
</dbReference>
<dbReference type="InterPro" id="IPR002504">
    <property type="entry name" value="NADK"/>
</dbReference>
<dbReference type="NCBIfam" id="NF002306">
    <property type="entry name" value="PRK01231.1"/>
    <property type="match status" value="1"/>
</dbReference>
<dbReference type="PANTHER" id="PTHR20275">
    <property type="entry name" value="NAD KINASE"/>
    <property type="match status" value="1"/>
</dbReference>
<dbReference type="PANTHER" id="PTHR20275:SF0">
    <property type="entry name" value="NAD KINASE"/>
    <property type="match status" value="1"/>
</dbReference>
<dbReference type="Pfam" id="PF01513">
    <property type="entry name" value="NAD_kinase"/>
    <property type="match status" value="1"/>
</dbReference>
<dbReference type="Pfam" id="PF20143">
    <property type="entry name" value="NAD_kinase_C"/>
    <property type="match status" value="1"/>
</dbReference>
<dbReference type="SUPFAM" id="SSF111331">
    <property type="entry name" value="NAD kinase/diacylglycerol kinase-like"/>
    <property type="match status" value="1"/>
</dbReference>
<sequence>MPHLHESELFHAIKNPAFRRIGLMGRARTRSVTQSIGQIAQIINDMNLTLIMDVQTANLPTLNLTEIERVKIVKRSLIGEICDLVIVVGGDGSILHAAEALARYRVPVLGVNRGRLGFLADVKPDEAAFKLRQVLMGNYQLDHRFLLTMEIREGRKIIHEDMALNDVVLHAGKSVHMIDFQMKIDGHDVYRQHSDGLIVATPTGSTAYALSGGGPIIHPSMDAICLVPMHPHTLSSRPIVVSGTSEICIRIHEDNRTQPMVSADGKPSTPLDQEQRLYIRKHPDKLTLLHPPGFDFYEACRTKLHWNVHAEEFSLDVDDDIMDDE</sequence>
<name>NADK_PSYA2</name>
<gene>
    <name evidence="1" type="primary">nadK</name>
    <name type="ordered locus">Psyc_1465</name>
</gene>
<protein>
    <recommendedName>
        <fullName evidence="1">NAD kinase</fullName>
        <ecNumber evidence="1">2.7.1.23</ecNumber>
    </recommendedName>
    <alternativeName>
        <fullName evidence="1">ATP-dependent NAD kinase</fullName>
    </alternativeName>
</protein>
<comment type="function">
    <text evidence="1">Involved in the regulation of the intracellular balance of NAD and NADP, and is a key enzyme in the biosynthesis of NADP. Catalyzes specifically the phosphorylation on 2'-hydroxyl of the adenosine moiety of NAD to yield NADP.</text>
</comment>
<comment type="catalytic activity">
    <reaction evidence="1">
        <text>NAD(+) + ATP = ADP + NADP(+) + H(+)</text>
        <dbReference type="Rhea" id="RHEA:18629"/>
        <dbReference type="ChEBI" id="CHEBI:15378"/>
        <dbReference type="ChEBI" id="CHEBI:30616"/>
        <dbReference type="ChEBI" id="CHEBI:57540"/>
        <dbReference type="ChEBI" id="CHEBI:58349"/>
        <dbReference type="ChEBI" id="CHEBI:456216"/>
        <dbReference type="EC" id="2.7.1.23"/>
    </reaction>
</comment>
<comment type="cofactor">
    <cofactor evidence="1">
        <name>a divalent metal cation</name>
        <dbReference type="ChEBI" id="CHEBI:60240"/>
    </cofactor>
</comment>
<comment type="subcellular location">
    <subcellularLocation>
        <location evidence="1">Cytoplasm</location>
    </subcellularLocation>
</comment>
<comment type="similarity">
    <text evidence="1">Belongs to the NAD kinase family.</text>
</comment>
<comment type="sequence caution" evidence="2">
    <conflict type="erroneous initiation">
        <sequence resource="EMBL-CDS" id="AAZ19313"/>
    </conflict>
    <text>Extended N-terminus.</text>
</comment>